<organism>
    <name type="scientific">Desulfatibacillum aliphaticivorans</name>
    <dbReference type="NCBI Taxonomy" id="218208"/>
    <lineage>
        <taxon>Bacteria</taxon>
        <taxon>Pseudomonadati</taxon>
        <taxon>Thermodesulfobacteriota</taxon>
        <taxon>Desulfobacteria</taxon>
        <taxon>Desulfobacterales</taxon>
        <taxon>Desulfatibacillaceae</taxon>
        <taxon>Desulfatibacillum</taxon>
    </lineage>
</organism>
<evidence type="ECO:0000255" key="1">
    <source>
        <dbReference type="HAMAP-Rule" id="MF_00017"/>
    </source>
</evidence>
<accession>B8FG16</accession>
<keyword id="KW-0227">DNA damage</keyword>
<keyword id="KW-0233">DNA recombination</keyword>
<keyword id="KW-0234">DNA repair</keyword>
<keyword id="KW-0479">Metal-binding</keyword>
<keyword id="KW-1185">Reference proteome</keyword>
<keyword id="KW-0862">Zinc</keyword>
<keyword id="KW-0863">Zinc-finger</keyword>
<dbReference type="EMBL" id="CP001322">
    <property type="protein sequence ID" value="ACL03696.1"/>
    <property type="molecule type" value="Genomic_DNA"/>
</dbReference>
<dbReference type="RefSeq" id="WP_012611125.1">
    <property type="nucleotide sequence ID" value="NC_011768.1"/>
</dbReference>
<dbReference type="SMR" id="B8FG16"/>
<dbReference type="KEGG" id="dal:Dalk_2000"/>
<dbReference type="eggNOG" id="COG0353">
    <property type="taxonomic scope" value="Bacteria"/>
</dbReference>
<dbReference type="HOGENOM" id="CLU_060739_1_0_7"/>
<dbReference type="Proteomes" id="UP000000739">
    <property type="component" value="Chromosome"/>
</dbReference>
<dbReference type="GO" id="GO:0003677">
    <property type="term" value="F:DNA binding"/>
    <property type="evidence" value="ECO:0007669"/>
    <property type="project" value="UniProtKB-UniRule"/>
</dbReference>
<dbReference type="GO" id="GO:0008270">
    <property type="term" value="F:zinc ion binding"/>
    <property type="evidence" value="ECO:0007669"/>
    <property type="project" value="UniProtKB-KW"/>
</dbReference>
<dbReference type="GO" id="GO:0006310">
    <property type="term" value="P:DNA recombination"/>
    <property type="evidence" value="ECO:0007669"/>
    <property type="project" value="UniProtKB-UniRule"/>
</dbReference>
<dbReference type="GO" id="GO:0006281">
    <property type="term" value="P:DNA repair"/>
    <property type="evidence" value="ECO:0007669"/>
    <property type="project" value="UniProtKB-UniRule"/>
</dbReference>
<dbReference type="CDD" id="cd01025">
    <property type="entry name" value="TOPRIM_recR"/>
    <property type="match status" value="1"/>
</dbReference>
<dbReference type="Gene3D" id="3.30.60.80">
    <property type="match status" value="1"/>
</dbReference>
<dbReference type="Gene3D" id="3.40.1360.10">
    <property type="match status" value="1"/>
</dbReference>
<dbReference type="Gene3D" id="6.10.250.240">
    <property type="match status" value="1"/>
</dbReference>
<dbReference type="Gene3D" id="1.10.8.420">
    <property type="entry name" value="RecR Domain 1"/>
    <property type="match status" value="1"/>
</dbReference>
<dbReference type="HAMAP" id="MF_00017">
    <property type="entry name" value="RecR"/>
    <property type="match status" value="1"/>
</dbReference>
<dbReference type="InterPro" id="IPR000093">
    <property type="entry name" value="DNA_Rcmb_RecR"/>
</dbReference>
<dbReference type="InterPro" id="IPR003583">
    <property type="entry name" value="Hlx-hairpin-Hlx_DNA-bd_motif"/>
</dbReference>
<dbReference type="InterPro" id="IPR023627">
    <property type="entry name" value="Rcmb_RecR"/>
</dbReference>
<dbReference type="InterPro" id="IPR015967">
    <property type="entry name" value="Rcmb_RecR_Znf"/>
</dbReference>
<dbReference type="InterPro" id="IPR006171">
    <property type="entry name" value="TOPRIM_dom"/>
</dbReference>
<dbReference type="InterPro" id="IPR034137">
    <property type="entry name" value="TOPRIM_RecR"/>
</dbReference>
<dbReference type="NCBIfam" id="TIGR00615">
    <property type="entry name" value="recR"/>
    <property type="match status" value="1"/>
</dbReference>
<dbReference type="PANTHER" id="PTHR30446">
    <property type="entry name" value="RECOMBINATION PROTEIN RECR"/>
    <property type="match status" value="1"/>
</dbReference>
<dbReference type="PANTHER" id="PTHR30446:SF0">
    <property type="entry name" value="RECOMBINATION PROTEIN RECR"/>
    <property type="match status" value="1"/>
</dbReference>
<dbReference type="Pfam" id="PF21175">
    <property type="entry name" value="RecR_C"/>
    <property type="match status" value="1"/>
</dbReference>
<dbReference type="Pfam" id="PF21176">
    <property type="entry name" value="RecR_HhH"/>
    <property type="match status" value="1"/>
</dbReference>
<dbReference type="Pfam" id="PF02132">
    <property type="entry name" value="RecR_ZnF"/>
    <property type="match status" value="1"/>
</dbReference>
<dbReference type="Pfam" id="PF13662">
    <property type="entry name" value="Toprim_4"/>
    <property type="match status" value="1"/>
</dbReference>
<dbReference type="SMART" id="SM00278">
    <property type="entry name" value="HhH1"/>
    <property type="match status" value="1"/>
</dbReference>
<dbReference type="SMART" id="SM00493">
    <property type="entry name" value="TOPRIM"/>
    <property type="match status" value="1"/>
</dbReference>
<dbReference type="SUPFAM" id="SSF111304">
    <property type="entry name" value="Recombination protein RecR"/>
    <property type="match status" value="1"/>
</dbReference>
<dbReference type="PROSITE" id="PS01300">
    <property type="entry name" value="RECR"/>
    <property type="match status" value="1"/>
</dbReference>
<dbReference type="PROSITE" id="PS50880">
    <property type="entry name" value="TOPRIM"/>
    <property type="match status" value="1"/>
</dbReference>
<proteinExistence type="inferred from homology"/>
<gene>
    <name evidence="1" type="primary">recR</name>
    <name type="ordered locus">Dalk_2000</name>
</gene>
<comment type="function">
    <text evidence="1">May play a role in DNA repair. It seems to be involved in an RecBC-independent recombinational process of DNA repair. It may act with RecF and RecO.</text>
</comment>
<comment type="similarity">
    <text evidence="1">Belongs to the RecR family.</text>
</comment>
<protein>
    <recommendedName>
        <fullName evidence="1">Recombination protein RecR</fullName>
    </recommendedName>
</protein>
<feature type="chain" id="PRO_1000195378" description="Recombination protein RecR">
    <location>
        <begin position="1"/>
        <end position="199"/>
    </location>
</feature>
<feature type="domain" description="Toprim" evidence="1">
    <location>
        <begin position="81"/>
        <end position="176"/>
    </location>
</feature>
<feature type="zinc finger region" description="C4-type" evidence="1">
    <location>
        <begin position="58"/>
        <end position="73"/>
    </location>
</feature>
<reference key="1">
    <citation type="journal article" date="2012" name="Environ. Microbiol.">
        <title>The genome sequence of Desulfatibacillum alkenivorans AK-01: a blueprint for anaerobic alkane oxidation.</title>
        <authorList>
            <person name="Callaghan A.V."/>
            <person name="Morris B.E."/>
            <person name="Pereira I.A."/>
            <person name="McInerney M.J."/>
            <person name="Austin R.N."/>
            <person name="Groves J.T."/>
            <person name="Kukor J.J."/>
            <person name="Suflita J.M."/>
            <person name="Young L.Y."/>
            <person name="Zylstra G.J."/>
            <person name="Wawrik B."/>
        </authorList>
    </citation>
    <scope>NUCLEOTIDE SEQUENCE [LARGE SCALE GENOMIC DNA]</scope>
    <source>
        <strain>AK-01</strain>
    </source>
</reference>
<name>RECR_DESAL</name>
<sequence>MSFYPPSLVNLIKQLSKLPGIGEKTAERLALHILRGSVKDAQALAESISEAKETVRLCSVCYGLADSDPCHICRDATRDQDVVCVVEQGTDMVALEKSGAFKGRYHVLQGCLSPMNGVGPDNLRIRELVERLKKEKIKEVVVATGTSVEGESTANYLRQVLEGSGVKITRIASGVPIGGDLKYTDALTLKRALDSRHCL</sequence>